<dbReference type="EMBL" id="GAIH01000008">
    <property type="protein sequence ID" value="JAB84709.1"/>
    <property type="molecule type" value="mRNA"/>
</dbReference>
<dbReference type="SMR" id="W4VSM1"/>
<dbReference type="GO" id="GO:0005576">
    <property type="term" value="C:extracellular region"/>
    <property type="evidence" value="ECO:0007669"/>
    <property type="project" value="UniProtKB-SubCell"/>
</dbReference>
<reference key="1">
    <citation type="journal article" date="2014" name="PLoS ONE">
        <title>Diversity of conotoxin gene superfamilies in the venomous snail, Conus victoriae.</title>
        <authorList>
            <person name="Robinson S.D."/>
            <person name="Safavi-Hemami H."/>
            <person name="McIntosh L.D."/>
            <person name="Purcell A.W."/>
            <person name="Norton R.S."/>
            <person name="Papenfuss A.T."/>
        </authorList>
    </citation>
    <scope>NUCLEOTIDE SEQUENCE [MRNA]</scope>
    <source>
        <tissue>Venom gland</tissue>
    </source>
</reference>
<accession>W4VSM1</accession>
<name>FX1_CONVC</name>
<evidence type="ECO:0000255" key="1"/>
<evidence type="ECO:0000303" key="2">
    <source>
    </source>
</evidence>
<evidence type="ECO:0000305" key="3"/>
<evidence type="ECO:0000305" key="4">
    <source>
    </source>
</evidence>
<sequence length="93" mass="10766">MQRGAVLLGVVAFLALWPQAGAEPYNLNDPDVRAMINDGRKLMDTCAKANHYIADRWSTYRIEYLEDKGLYHRMLRELVPCLNNFLRTRQEAP</sequence>
<organism>
    <name type="scientific">Conus victoriae</name>
    <name type="common">Queen Victoria cone</name>
    <dbReference type="NCBI Taxonomy" id="319920"/>
    <lineage>
        <taxon>Eukaryota</taxon>
        <taxon>Metazoa</taxon>
        <taxon>Spiralia</taxon>
        <taxon>Lophotrochozoa</taxon>
        <taxon>Mollusca</taxon>
        <taxon>Gastropoda</taxon>
        <taxon>Caenogastropoda</taxon>
        <taxon>Neogastropoda</taxon>
        <taxon>Conoidea</taxon>
        <taxon>Conidae</taxon>
        <taxon>Conus</taxon>
        <taxon>Cylinder</taxon>
    </lineage>
</organism>
<protein>
    <recommendedName>
        <fullName evidence="2">Conotoxin F_Vc1</fullName>
    </recommendedName>
</protein>
<comment type="subcellular location">
    <subcellularLocation>
        <location evidence="4">Secreted</location>
    </subcellularLocation>
</comment>
<comment type="tissue specificity">
    <text evidence="4">Expressed by the venom duct.</text>
</comment>
<comment type="domain">
    <text evidence="3">The cysteine framework is C-C.</text>
</comment>
<comment type="PTM">
    <text evidence="3">Contains 4 disulfide bonds.</text>
</comment>
<comment type="similarity">
    <text evidence="3">Belongs to the conotoxin F superfamily.</text>
</comment>
<proteinExistence type="inferred from homology"/>
<feature type="signal peptide" evidence="1">
    <location>
        <begin position="1"/>
        <end position="22"/>
    </location>
</feature>
<feature type="propeptide" id="PRO_0000444680" evidence="3">
    <location>
        <begin position="23"/>
        <end position="33"/>
    </location>
</feature>
<feature type="chain" id="PRO_5004851044" description="Conotoxin F_Vc1" evidence="3">
    <location>
        <begin position="34"/>
        <end position="93"/>
    </location>
</feature>
<keyword id="KW-1015">Disulfide bond</keyword>
<keyword id="KW-0964">Secreted</keyword>
<keyword id="KW-0732">Signal</keyword>